<reference key="1">
    <citation type="journal article" date="2002" name="J. Mol. Microbiol. Biotechnol.">
        <title>The genome of Methanosarcina mazei: evidence for lateral gene transfer between Bacteria and Archaea.</title>
        <authorList>
            <person name="Deppenmeier U."/>
            <person name="Johann A."/>
            <person name="Hartsch T."/>
            <person name="Merkl R."/>
            <person name="Schmitz R.A."/>
            <person name="Martinez-Arias R."/>
            <person name="Henne A."/>
            <person name="Wiezer A."/>
            <person name="Baeumer S."/>
            <person name="Jacobi C."/>
            <person name="Brueggemann H."/>
            <person name="Lienard T."/>
            <person name="Christmann A."/>
            <person name="Boemecke M."/>
            <person name="Steckel S."/>
            <person name="Bhattacharyya A."/>
            <person name="Lykidis A."/>
            <person name="Overbeek R."/>
            <person name="Klenk H.-P."/>
            <person name="Gunsalus R.P."/>
            <person name="Fritz H.-J."/>
            <person name="Gottschalk G."/>
        </authorList>
    </citation>
    <scope>NUCLEOTIDE SEQUENCE [LARGE SCALE GENOMIC DNA]</scope>
    <source>
        <strain>ATCC BAA-159 / DSM 3647 / Goe1 / Go1 / JCM 11833 / OCM 88</strain>
    </source>
</reference>
<organism>
    <name type="scientific">Methanosarcina mazei (strain ATCC BAA-159 / DSM 3647 / Goe1 / Go1 / JCM 11833 / OCM 88)</name>
    <name type="common">Methanosarcina frisia</name>
    <dbReference type="NCBI Taxonomy" id="192952"/>
    <lineage>
        <taxon>Archaea</taxon>
        <taxon>Methanobacteriati</taxon>
        <taxon>Methanobacteriota</taxon>
        <taxon>Stenosarchaea group</taxon>
        <taxon>Methanomicrobia</taxon>
        <taxon>Methanosarcinales</taxon>
        <taxon>Methanosarcinaceae</taxon>
        <taxon>Methanosarcina</taxon>
    </lineage>
</organism>
<protein>
    <recommendedName>
        <fullName evidence="1">ORC1-type DNA replication protein 2</fullName>
    </recommendedName>
</protein>
<comment type="function">
    <text evidence="1">Involved in regulation of DNA replication.</text>
</comment>
<comment type="similarity">
    <text evidence="1">Belongs to the CDC6/cdc18 family.</text>
</comment>
<accession>Q8PX44</accession>
<feature type="chain" id="PRO_0000151005" description="ORC1-type DNA replication protein 2">
    <location>
        <begin position="1"/>
        <end position="373"/>
    </location>
</feature>
<feature type="binding site" evidence="1">
    <location>
        <begin position="63"/>
        <end position="67"/>
    </location>
    <ligand>
        <name>ATP</name>
        <dbReference type="ChEBI" id="CHEBI:30616"/>
    </ligand>
</feature>
<feature type="binding site" evidence="1">
    <location>
        <position position="205"/>
    </location>
    <ligand>
        <name>ATP</name>
        <dbReference type="ChEBI" id="CHEBI:30616"/>
    </ligand>
</feature>
<feature type="binding site" evidence="1">
    <location>
        <position position="217"/>
    </location>
    <ligand>
        <name>ATP</name>
        <dbReference type="ChEBI" id="CHEBI:30616"/>
    </ligand>
</feature>
<keyword id="KW-0067">ATP-binding</keyword>
<keyword id="KW-0235">DNA replication</keyword>
<keyword id="KW-0547">Nucleotide-binding</keyword>
<gene>
    <name type="primary">cdc6-2</name>
    <name type="ordered locus">MM_1378</name>
</gene>
<evidence type="ECO:0000255" key="1">
    <source>
        <dbReference type="HAMAP-Rule" id="MF_01407"/>
    </source>
</evidence>
<dbReference type="EMBL" id="AE008384">
    <property type="protein sequence ID" value="AAM31074.1"/>
    <property type="molecule type" value="Genomic_DNA"/>
</dbReference>
<dbReference type="RefSeq" id="WP_011033324.1">
    <property type="nucleotide sequence ID" value="NC_003901.1"/>
</dbReference>
<dbReference type="SMR" id="Q8PX44"/>
<dbReference type="KEGG" id="mma:MM_1378"/>
<dbReference type="PATRIC" id="fig|192952.21.peg.1595"/>
<dbReference type="eggNOG" id="arCOG00467">
    <property type="taxonomic scope" value="Archaea"/>
</dbReference>
<dbReference type="HOGENOM" id="CLU_025112_3_0_2"/>
<dbReference type="Proteomes" id="UP000000595">
    <property type="component" value="Chromosome"/>
</dbReference>
<dbReference type="GO" id="GO:0005524">
    <property type="term" value="F:ATP binding"/>
    <property type="evidence" value="ECO:0007669"/>
    <property type="project" value="UniProtKB-UniRule"/>
</dbReference>
<dbReference type="GO" id="GO:0006260">
    <property type="term" value="P:DNA replication"/>
    <property type="evidence" value="ECO:0007669"/>
    <property type="project" value="UniProtKB-UniRule"/>
</dbReference>
<dbReference type="FunFam" id="1.10.10.10:FF:000972">
    <property type="entry name" value="ORC1-type DNA replication protein"/>
    <property type="match status" value="1"/>
</dbReference>
<dbReference type="FunFam" id="3.40.50.300:FF:000930">
    <property type="entry name" value="ORC1-type DNA replication protein"/>
    <property type="match status" value="1"/>
</dbReference>
<dbReference type="Gene3D" id="1.10.8.60">
    <property type="match status" value="1"/>
</dbReference>
<dbReference type="Gene3D" id="3.40.50.300">
    <property type="entry name" value="P-loop containing nucleotide triphosphate hydrolases"/>
    <property type="match status" value="1"/>
</dbReference>
<dbReference type="Gene3D" id="1.10.10.10">
    <property type="entry name" value="Winged helix-like DNA-binding domain superfamily/Winged helix DNA-binding domain"/>
    <property type="match status" value="1"/>
</dbReference>
<dbReference type="HAMAP" id="MF_01407">
    <property type="entry name" value="ORC1_type_DNA_replic_protein"/>
    <property type="match status" value="1"/>
</dbReference>
<dbReference type="InterPro" id="IPR041664">
    <property type="entry name" value="AAA_16"/>
</dbReference>
<dbReference type="InterPro" id="IPR015163">
    <property type="entry name" value="Cdc6_C"/>
</dbReference>
<dbReference type="InterPro" id="IPR055237">
    <property type="entry name" value="Cdc6_lid"/>
</dbReference>
<dbReference type="InterPro" id="IPR050311">
    <property type="entry name" value="ORC1/CDC6"/>
</dbReference>
<dbReference type="InterPro" id="IPR014277">
    <property type="entry name" value="Orc1/Cdc6_arc"/>
</dbReference>
<dbReference type="InterPro" id="IPR027417">
    <property type="entry name" value="P-loop_NTPase"/>
</dbReference>
<dbReference type="InterPro" id="IPR036388">
    <property type="entry name" value="WH-like_DNA-bd_sf"/>
</dbReference>
<dbReference type="InterPro" id="IPR036390">
    <property type="entry name" value="WH_DNA-bd_sf"/>
</dbReference>
<dbReference type="NCBIfam" id="TIGR02928">
    <property type="entry name" value="orc1/cdc6 family replication initiation protein"/>
    <property type="match status" value="1"/>
</dbReference>
<dbReference type="NCBIfam" id="NF001624">
    <property type="entry name" value="PRK00411.1-2"/>
    <property type="match status" value="1"/>
</dbReference>
<dbReference type="NCBIfam" id="NF001626">
    <property type="entry name" value="PRK00411.1-5"/>
    <property type="match status" value="1"/>
</dbReference>
<dbReference type="PANTHER" id="PTHR10763:SF26">
    <property type="entry name" value="CELL DIVISION CONTROL PROTEIN 6 HOMOLOG"/>
    <property type="match status" value="1"/>
</dbReference>
<dbReference type="PANTHER" id="PTHR10763">
    <property type="entry name" value="CELL DIVISION CONTROL PROTEIN 6-RELATED"/>
    <property type="match status" value="1"/>
</dbReference>
<dbReference type="Pfam" id="PF13191">
    <property type="entry name" value="AAA_16"/>
    <property type="match status" value="1"/>
</dbReference>
<dbReference type="Pfam" id="PF09079">
    <property type="entry name" value="Cdc6_C"/>
    <property type="match status" value="1"/>
</dbReference>
<dbReference type="Pfam" id="PF22703">
    <property type="entry name" value="Cdc6_lid"/>
    <property type="match status" value="1"/>
</dbReference>
<dbReference type="SMART" id="SM01074">
    <property type="entry name" value="Cdc6_C"/>
    <property type="match status" value="1"/>
</dbReference>
<dbReference type="SUPFAM" id="SSF52540">
    <property type="entry name" value="P-loop containing nucleoside triphosphate hydrolases"/>
    <property type="match status" value="1"/>
</dbReference>
<dbReference type="SUPFAM" id="SSF46785">
    <property type="entry name" value="Winged helix' DNA-binding domain"/>
    <property type="match status" value="1"/>
</dbReference>
<proteinExistence type="inferred from homology"/>
<sequence>MTGNDILLWDETLFKDLSVLEPDYLPEYFPHRDSQLNALRFALKPALRGMRPLNCLLVGPPGTGKTSAIMKTFREVEAHAPNVVTVKVNCQIDSTRFAVMSRIYRQLFGISPPNSGIAFRKLFETVVNFLVSSEKVLIVALDDLNYLCCEGHANEVMYSLLRAHEQYPGAKIGVIGIVNDASDLYCLDSRVNSVFLPEEVSFPRYEEGEILDILKDRVRYGFYPKVISDEVLKLVVSYVEKTGDLRVGIDLLRRSGFNAERKGRRMILFEDVEKAYEASKLLHLCRGISLLSDPEKQLLELIAKKDEIKAGELYKSFHELTQLGYTRFYGMVNRLQTLNYVDADFTGKGKRGRTRIIKTKYEAEDILNCLKKA</sequence>
<name>CDC62_METMA</name>